<reference key="1">
    <citation type="journal article" date="2007" name="Science">
        <title>The Calyptogena magnifica chemoautotrophic symbiont genome.</title>
        <authorList>
            <person name="Newton I.L.G."/>
            <person name="Woyke T."/>
            <person name="Auchtung T.A."/>
            <person name="Dilly G.F."/>
            <person name="Dutton R.J."/>
            <person name="Fisher M.C."/>
            <person name="Fontanez K.M."/>
            <person name="Lau E."/>
            <person name="Stewart F.J."/>
            <person name="Richardson P.M."/>
            <person name="Barry K.W."/>
            <person name="Saunders E."/>
            <person name="Detter J.C."/>
            <person name="Wu D."/>
            <person name="Eisen J.A."/>
            <person name="Cavanaugh C.M."/>
        </authorList>
    </citation>
    <scope>NUCLEOTIDE SEQUENCE [LARGE SCALE GENOMIC DNA]</scope>
</reference>
<gene>
    <name evidence="1" type="primary">lpxD</name>
    <name type="ordered locus">Rmag_0554</name>
</gene>
<dbReference type="EC" id="2.3.1.191" evidence="1"/>
<dbReference type="EMBL" id="CP000488">
    <property type="protein sequence ID" value="ABL02306.1"/>
    <property type="molecule type" value="Genomic_DNA"/>
</dbReference>
<dbReference type="RefSeq" id="WP_011737931.1">
    <property type="nucleotide sequence ID" value="NC_008610.1"/>
</dbReference>
<dbReference type="SMR" id="A1AWJ9"/>
<dbReference type="STRING" id="413404.Rmag_0554"/>
<dbReference type="KEGG" id="rma:Rmag_0554"/>
<dbReference type="eggNOG" id="COG1044">
    <property type="taxonomic scope" value="Bacteria"/>
</dbReference>
<dbReference type="HOGENOM" id="CLU_049865_0_1_6"/>
<dbReference type="OrthoDB" id="9784739at2"/>
<dbReference type="UniPathway" id="UPA00973"/>
<dbReference type="Proteomes" id="UP000002587">
    <property type="component" value="Chromosome"/>
</dbReference>
<dbReference type="GO" id="GO:0016020">
    <property type="term" value="C:membrane"/>
    <property type="evidence" value="ECO:0007669"/>
    <property type="project" value="GOC"/>
</dbReference>
<dbReference type="GO" id="GO:0016410">
    <property type="term" value="F:N-acyltransferase activity"/>
    <property type="evidence" value="ECO:0007669"/>
    <property type="project" value="InterPro"/>
</dbReference>
<dbReference type="GO" id="GO:0009245">
    <property type="term" value="P:lipid A biosynthetic process"/>
    <property type="evidence" value="ECO:0007669"/>
    <property type="project" value="UniProtKB-UniRule"/>
</dbReference>
<dbReference type="CDD" id="cd03352">
    <property type="entry name" value="LbH_LpxD"/>
    <property type="match status" value="1"/>
</dbReference>
<dbReference type="Gene3D" id="2.160.10.10">
    <property type="entry name" value="Hexapeptide repeat proteins"/>
    <property type="match status" value="1"/>
</dbReference>
<dbReference type="Gene3D" id="3.40.1390.10">
    <property type="entry name" value="MurE/MurF, N-terminal domain"/>
    <property type="match status" value="1"/>
</dbReference>
<dbReference type="HAMAP" id="MF_00523">
    <property type="entry name" value="LpxD"/>
    <property type="match status" value="1"/>
</dbReference>
<dbReference type="InterPro" id="IPR001451">
    <property type="entry name" value="Hexapep"/>
</dbReference>
<dbReference type="InterPro" id="IPR007691">
    <property type="entry name" value="LpxD"/>
</dbReference>
<dbReference type="InterPro" id="IPR011004">
    <property type="entry name" value="Trimer_LpxA-like_sf"/>
</dbReference>
<dbReference type="InterPro" id="IPR020573">
    <property type="entry name" value="UDP_GlcNAc_AcTrfase_non-rep"/>
</dbReference>
<dbReference type="NCBIfam" id="TIGR01853">
    <property type="entry name" value="lipid_A_lpxD"/>
    <property type="match status" value="1"/>
</dbReference>
<dbReference type="NCBIfam" id="NF002060">
    <property type="entry name" value="PRK00892.1"/>
    <property type="match status" value="1"/>
</dbReference>
<dbReference type="PANTHER" id="PTHR43378">
    <property type="entry name" value="UDP-3-O-ACYLGLUCOSAMINE N-ACYLTRANSFERASE"/>
    <property type="match status" value="1"/>
</dbReference>
<dbReference type="PANTHER" id="PTHR43378:SF2">
    <property type="entry name" value="UDP-3-O-ACYLGLUCOSAMINE N-ACYLTRANSFERASE 1, MITOCHONDRIAL-RELATED"/>
    <property type="match status" value="1"/>
</dbReference>
<dbReference type="Pfam" id="PF00132">
    <property type="entry name" value="Hexapep"/>
    <property type="match status" value="3"/>
</dbReference>
<dbReference type="Pfam" id="PF04613">
    <property type="entry name" value="LpxD"/>
    <property type="match status" value="1"/>
</dbReference>
<dbReference type="SUPFAM" id="SSF51161">
    <property type="entry name" value="Trimeric LpxA-like enzymes"/>
    <property type="match status" value="1"/>
</dbReference>
<proteinExistence type="inferred from homology"/>
<evidence type="ECO:0000255" key="1">
    <source>
        <dbReference type="HAMAP-Rule" id="MF_00523"/>
    </source>
</evidence>
<organism>
    <name type="scientific">Ruthia magnifica subsp. Calyptogena magnifica</name>
    <dbReference type="NCBI Taxonomy" id="413404"/>
    <lineage>
        <taxon>Bacteria</taxon>
        <taxon>Pseudomonadati</taxon>
        <taxon>Pseudomonadota</taxon>
        <taxon>Gammaproteobacteria</taxon>
        <taxon>Candidatus Pseudothioglobaceae</taxon>
        <taxon>Candidatus Ruthturnera</taxon>
    </lineage>
</organism>
<sequence length="332" mass="35555">MYTLGEIAKTINAKLVGDANIEITGIATSLSANQTQLTYINGNKYKQMLINSKAGVVILNNNLLKNCPTNALVVDNVYLAFAKATHLFKKQTVHCQGTHSSAKINYAKIAPNCIIGKNVVIGNHCTIAPNVVIEDDVIIGNYTLIQPNVSILQGCSIGNNVVISPGVVIGSEGFGNAQDQQKHWYSIAHLGYVIIGSNVSIGANTTIDRGTIEDTQIHNGVQIDNLVHIAHNVIIGQDSAIAATVTIGGSCTIGKRCMIGGGATIASHISLVDDIIVTGASTVDKNLSEQGHYTGFTSINKHQKWKKIQVWLLNLDKIAHYLNIKLKELKGK</sequence>
<comment type="function">
    <text evidence="1">Catalyzes the N-acylation of UDP-3-O-acylglucosamine using 3-hydroxyacyl-ACP as the acyl donor. Is involved in the biosynthesis of lipid A, a phosphorylated glycolipid that anchors the lipopolysaccharide to the outer membrane of the cell.</text>
</comment>
<comment type="catalytic activity">
    <reaction evidence="1">
        <text>a UDP-3-O-[(3R)-3-hydroxyacyl]-alpha-D-glucosamine + a (3R)-hydroxyacyl-[ACP] = a UDP-2-N,3-O-bis[(3R)-3-hydroxyacyl]-alpha-D-glucosamine + holo-[ACP] + H(+)</text>
        <dbReference type="Rhea" id="RHEA:53836"/>
        <dbReference type="Rhea" id="RHEA-COMP:9685"/>
        <dbReference type="Rhea" id="RHEA-COMP:9945"/>
        <dbReference type="ChEBI" id="CHEBI:15378"/>
        <dbReference type="ChEBI" id="CHEBI:64479"/>
        <dbReference type="ChEBI" id="CHEBI:78827"/>
        <dbReference type="ChEBI" id="CHEBI:137740"/>
        <dbReference type="ChEBI" id="CHEBI:137748"/>
        <dbReference type="EC" id="2.3.1.191"/>
    </reaction>
</comment>
<comment type="pathway">
    <text evidence="1">Bacterial outer membrane biogenesis; LPS lipid A biosynthesis.</text>
</comment>
<comment type="subunit">
    <text evidence="1">Homotrimer.</text>
</comment>
<comment type="similarity">
    <text evidence="1">Belongs to the transferase hexapeptide repeat family. LpxD subfamily.</text>
</comment>
<name>LPXD_RUTMC</name>
<protein>
    <recommendedName>
        <fullName evidence="1">UDP-3-O-acylglucosamine N-acyltransferase</fullName>
        <ecNumber evidence="1">2.3.1.191</ecNumber>
    </recommendedName>
</protein>
<accession>A1AWJ9</accession>
<feature type="chain" id="PRO_1000050960" description="UDP-3-O-acylglucosamine N-acyltransferase">
    <location>
        <begin position="1"/>
        <end position="332"/>
    </location>
</feature>
<feature type="active site" description="Proton acceptor" evidence="1">
    <location>
        <position position="231"/>
    </location>
</feature>
<keyword id="KW-0012">Acyltransferase</keyword>
<keyword id="KW-0441">Lipid A biosynthesis</keyword>
<keyword id="KW-0444">Lipid biosynthesis</keyword>
<keyword id="KW-0443">Lipid metabolism</keyword>
<keyword id="KW-0677">Repeat</keyword>
<keyword id="KW-0808">Transferase</keyword>